<proteinExistence type="evidence at transcript level"/>
<reference key="1">
    <citation type="submission" date="2006-08" db="EMBL/GenBank/DDBJ databases">
        <authorList>
            <consortium name="NIH - Xenopus Gene Collection (XGC) project"/>
        </authorList>
    </citation>
    <scope>NUCLEOTIDE SEQUENCE [LARGE SCALE MRNA]</scope>
    <source>
        <tissue>Brain</tissue>
    </source>
</reference>
<accession>Q0P4Y1</accession>
<dbReference type="EC" id="2.3.1.33" evidence="1"/>
<dbReference type="EMBL" id="BC121852">
    <property type="protein sequence ID" value="AAI21853.1"/>
    <property type="molecule type" value="mRNA"/>
</dbReference>
<dbReference type="RefSeq" id="NP_001072454.1">
    <property type="nucleotide sequence ID" value="NM_001078986.1"/>
</dbReference>
<dbReference type="RefSeq" id="XP_012808828.1">
    <property type="nucleotide sequence ID" value="XM_012953374.2"/>
</dbReference>
<dbReference type="RefSeq" id="XP_012808829.1">
    <property type="nucleotide sequence ID" value="XM_012953375.2"/>
</dbReference>
<dbReference type="SMR" id="Q0P4Y1"/>
<dbReference type="FunCoup" id="Q0P4Y1">
    <property type="interactions" value="9"/>
</dbReference>
<dbReference type="PaxDb" id="8364-ENSXETP00000008705"/>
<dbReference type="DNASU" id="779909"/>
<dbReference type="GeneID" id="779909"/>
<dbReference type="KEGG" id="xtr:779909"/>
<dbReference type="AGR" id="Xenbase:XB-GENE-5881951"/>
<dbReference type="CTD" id="375607"/>
<dbReference type="Xenbase" id="XB-GENE-5881951">
    <property type="gene designation" value="nat16"/>
</dbReference>
<dbReference type="eggNOG" id="ENOG502QW73">
    <property type="taxonomic scope" value="Eukaryota"/>
</dbReference>
<dbReference type="HOGENOM" id="CLU_074598_0_0_1"/>
<dbReference type="InParanoid" id="Q0P4Y1"/>
<dbReference type="OMA" id="WHYLNID"/>
<dbReference type="OrthoDB" id="8889733at2759"/>
<dbReference type="PhylomeDB" id="Q0P4Y1"/>
<dbReference type="TreeFam" id="TF331490"/>
<dbReference type="Proteomes" id="UP000008143">
    <property type="component" value="Chromosome 3"/>
</dbReference>
<dbReference type="Bgee" id="ENSXETG00000004015">
    <property type="expression patterns" value="Expressed in brain and 2 other cell types or tissues"/>
</dbReference>
<dbReference type="ExpressionAtlas" id="Q0P4Y1">
    <property type="expression patterns" value="differential"/>
</dbReference>
<dbReference type="GO" id="GO:0047981">
    <property type="term" value="F:L-histidine N-acetyltransferase activity"/>
    <property type="evidence" value="ECO:0000250"/>
    <property type="project" value="UniProtKB"/>
</dbReference>
<dbReference type="CDD" id="cd04301">
    <property type="entry name" value="NAT_SF"/>
    <property type="match status" value="1"/>
</dbReference>
<dbReference type="FunFam" id="3.40.630.30:FF:000039">
    <property type="entry name" value="Probable N-acetyltransferase 16"/>
    <property type="match status" value="1"/>
</dbReference>
<dbReference type="Gene3D" id="3.40.630.30">
    <property type="match status" value="1"/>
</dbReference>
<dbReference type="InterPro" id="IPR016181">
    <property type="entry name" value="Acyl_CoA_acyltransferase"/>
</dbReference>
<dbReference type="InterPro" id="IPR000182">
    <property type="entry name" value="GNAT_dom"/>
</dbReference>
<dbReference type="InterPro" id="IPR056483">
    <property type="entry name" value="Hisat_C"/>
</dbReference>
<dbReference type="PANTHER" id="PTHR47403">
    <property type="entry name" value="LOC100145250 PROTEIN"/>
    <property type="match status" value="1"/>
</dbReference>
<dbReference type="PANTHER" id="PTHR47403:SF3">
    <property type="entry name" value="N-ACETYLTRANSFERASE 16-RELATED"/>
    <property type="match status" value="1"/>
</dbReference>
<dbReference type="Pfam" id="PF00583">
    <property type="entry name" value="Acetyltransf_1"/>
    <property type="match status" value="1"/>
</dbReference>
<dbReference type="Pfam" id="PF24066">
    <property type="entry name" value="Hisat_C"/>
    <property type="match status" value="1"/>
</dbReference>
<dbReference type="SUPFAM" id="SSF55729">
    <property type="entry name" value="Acyl-CoA N-acyltransferases (Nat)"/>
    <property type="match status" value="1"/>
</dbReference>
<dbReference type="PROSITE" id="PS51186">
    <property type="entry name" value="GNAT"/>
    <property type="match status" value="1"/>
</dbReference>
<gene>
    <name type="primary">hisat</name>
    <name type="synonym">nat16</name>
</gene>
<sequence>MKIEAVPGAPQDGEFEFVLAAEKEFEEIISISHGIYGGLDYLPSRYHSWINEKDRMVVLAKKDGTVIGLLSVFVVDGGETALLEGLRVAPWERGRGVAGVLQRFCIKLVKHRYPSVKVMRLTRDDKLSAKELTKYRVIAKQGILLLSFNAPDLASRLSSIPLPPAASRPPPPIELTPEDVRDVFLERGGLLKDLLPNQTIIQDWQPFQALPGNQDLLRRKTLCWMVDDLIQPQVATLCTAPFPVPAGPLCFYLNIDVFGSELQSVQEQLLSHLHAHVPKLPADVRCQLFLPPNLWRPMADFCTLVLGLHLEKGYTEQYLLEADI</sequence>
<keyword id="KW-0012">Acyltransferase</keyword>
<keyword id="KW-1185">Reference proteome</keyword>
<keyword id="KW-0808">Transferase</keyword>
<name>HISAT_XENTR</name>
<comment type="function">
    <text evidence="1">Enzyme responsible for the N-acetyl-histidine (NAH) synthesis, which is a major constituent of brain and lens of ectothermic vertebrates.</text>
</comment>
<comment type="catalytic activity">
    <reaction evidence="1">
        <text>L-histidine + acetyl-CoA = N(alpha)-acetyl-L-histidine + CoA + H(+)</text>
        <dbReference type="Rhea" id="RHEA:24596"/>
        <dbReference type="ChEBI" id="CHEBI:15378"/>
        <dbReference type="ChEBI" id="CHEBI:57287"/>
        <dbReference type="ChEBI" id="CHEBI:57288"/>
        <dbReference type="ChEBI" id="CHEBI:57595"/>
        <dbReference type="ChEBI" id="CHEBI:57772"/>
        <dbReference type="EC" id="2.3.1.33"/>
    </reaction>
</comment>
<comment type="miscellaneous">
    <text evidence="2">Strong histidine N-acetyltransferase activity has been detected in ectothermic vertebrates and not in endothermic birds and mammals.</text>
</comment>
<feature type="chain" id="PRO_0000309190" description="Histidine N-acetyltransferase">
    <location>
        <begin position="1"/>
        <end position="324"/>
    </location>
</feature>
<feature type="domain" description="N-acetyltransferase" evidence="3">
    <location>
        <begin position="15"/>
        <end position="151"/>
    </location>
</feature>
<evidence type="ECO:0000250" key="1">
    <source>
        <dbReference type="UniProtKB" id="I3J7Q8"/>
    </source>
</evidence>
<evidence type="ECO:0000250" key="2">
    <source>
        <dbReference type="UniProtKB" id="Q8N8M0"/>
    </source>
</evidence>
<evidence type="ECO:0000255" key="3">
    <source>
        <dbReference type="PROSITE-ProRule" id="PRU00532"/>
    </source>
</evidence>
<protein>
    <recommendedName>
        <fullName>Histidine N-acetyltransferase</fullName>
        <ecNumber evidence="1">2.3.1.33</ecNumber>
    </recommendedName>
</protein>
<organism>
    <name type="scientific">Xenopus tropicalis</name>
    <name type="common">Western clawed frog</name>
    <name type="synonym">Silurana tropicalis</name>
    <dbReference type="NCBI Taxonomy" id="8364"/>
    <lineage>
        <taxon>Eukaryota</taxon>
        <taxon>Metazoa</taxon>
        <taxon>Chordata</taxon>
        <taxon>Craniata</taxon>
        <taxon>Vertebrata</taxon>
        <taxon>Euteleostomi</taxon>
        <taxon>Amphibia</taxon>
        <taxon>Batrachia</taxon>
        <taxon>Anura</taxon>
        <taxon>Pipoidea</taxon>
        <taxon>Pipidae</taxon>
        <taxon>Xenopodinae</taxon>
        <taxon>Xenopus</taxon>
        <taxon>Silurana</taxon>
    </lineage>
</organism>